<sequence length="115" mass="12726">MATDASYAAFVVDQAGPRLRVRVGRMFGEYALYVDEKVVGFLCDNRTLLKPTDAGREFFENPEIGHPYPGAKDYWVADDVVEEAPRFQDLLRVTAAALPAPKPRKAKTKTPGAQP</sequence>
<feature type="chain" id="PRO_0000066533" description="Uncharacterized 12.7 kDa protein in trpE 5'region">
    <location>
        <begin position="1"/>
        <end position="115"/>
    </location>
</feature>
<dbReference type="EMBL" id="M55917">
    <property type="protein sequence ID" value="AAA26592.1"/>
    <property type="molecule type" value="Genomic_DNA"/>
</dbReference>
<dbReference type="SMR" id="P22043"/>
<dbReference type="Gene3D" id="3.30.1460.30">
    <property type="entry name" value="YgaC/TfoX-N like chaperone"/>
    <property type="match status" value="1"/>
</dbReference>
<dbReference type="InterPro" id="IPR007076">
    <property type="entry name" value="TfoX_N"/>
</dbReference>
<dbReference type="Pfam" id="PF04993">
    <property type="entry name" value="TfoX_N"/>
    <property type="match status" value="1"/>
</dbReference>
<dbReference type="SUPFAM" id="SSF159894">
    <property type="entry name" value="YgaC/TfoX-N like"/>
    <property type="match status" value="1"/>
</dbReference>
<organism>
    <name type="scientific">Spirochaeta aurantia</name>
    <dbReference type="NCBI Taxonomy" id="147"/>
    <lineage>
        <taxon>Bacteria</taxon>
        <taxon>Pseudomonadati</taxon>
        <taxon>Spirochaetota</taxon>
        <taxon>Spirochaetia</taxon>
        <taxon>Spirochaetales</taxon>
        <taxon>Spirochaetaceae</taxon>
        <taxon>Spirochaeta</taxon>
    </lineage>
</organism>
<proteinExistence type="predicted"/>
<reference key="1">
    <citation type="journal article" date="1991" name="J. Bacteriol.">
        <title>Nucleotide sequence and analysis of a gene encoding anthranilate synthase component I in Spirochaeta aurantia.</title>
        <authorList>
            <person name="Brahamsha B."/>
            <person name="Han C.Y."/>
            <person name="Crawford I.P."/>
            <person name="Greenberg E.P."/>
        </authorList>
    </citation>
    <scope>NUCLEOTIDE SEQUENCE [GENOMIC DNA]</scope>
</reference>
<protein>
    <recommendedName>
        <fullName>Uncharacterized 12.7 kDa protein in trpE 5'region</fullName>
    </recommendedName>
    <alternativeName>
        <fullName>ORF 3</fullName>
    </alternativeName>
</protein>
<name>YTR3_SPIAU</name>
<accession>P22043</accession>